<protein>
    <recommendedName>
        <fullName evidence="1">Imidazole glycerol phosphate synthase subunit HisF</fullName>
        <ecNumber evidence="1">4.3.2.10</ecNumber>
    </recommendedName>
    <alternativeName>
        <fullName evidence="1">IGP synthase cyclase subunit</fullName>
    </alternativeName>
    <alternativeName>
        <fullName evidence="1">IGP synthase subunit HisF</fullName>
    </alternativeName>
    <alternativeName>
        <fullName evidence="1">ImGP synthase subunit HisF</fullName>
        <shortName evidence="1">IGPS subunit HisF</shortName>
    </alternativeName>
</protein>
<dbReference type="EC" id="4.3.2.10" evidence="1"/>
<dbReference type="EMBL" id="CP001389">
    <property type="protein sequence ID" value="ACP27130.1"/>
    <property type="molecule type" value="Genomic_DNA"/>
</dbReference>
<dbReference type="RefSeq" id="WP_012709877.1">
    <property type="nucleotide sequence ID" value="NC_012587.1"/>
</dbReference>
<dbReference type="RefSeq" id="YP_002827883.1">
    <property type="nucleotide sequence ID" value="NC_012587.1"/>
</dbReference>
<dbReference type="SMR" id="C3MBC1"/>
<dbReference type="STRING" id="394.NGR_c34000"/>
<dbReference type="KEGG" id="rhi:NGR_c34000"/>
<dbReference type="PATRIC" id="fig|394.7.peg.6249"/>
<dbReference type="eggNOG" id="COG0107">
    <property type="taxonomic scope" value="Bacteria"/>
</dbReference>
<dbReference type="HOGENOM" id="CLU_048577_4_0_5"/>
<dbReference type="OrthoDB" id="9781903at2"/>
<dbReference type="UniPathway" id="UPA00031">
    <property type="reaction ID" value="UER00010"/>
</dbReference>
<dbReference type="Proteomes" id="UP000001054">
    <property type="component" value="Chromosome"/>
</dbReference>
<dbReference type="GO" id="GO:0005737">
    <property type="term" value="C:cytoplasm"/>
    <property type="evidence" value="ECO:0007669"/>
    <property type="project" value="UniProtKB-SubCell"/>
</dbReference>
<dbReference type="GO" id="GO:0000107">
    <property type="term" value="F:imidazoleglycerol-phosphate synthase activity"/>
    <property type="evidence" value="ECO:0007669"/>
    <property type="project" value="UniProtKB-UniRule"/>
</dbReference>
<dbReference type="GO" id="GO:0016829">
    <property type="term" value="F:lyase activity"/>
    <property type="evidence" value="ECO:0007669"/>
    <property type="project" value="UniProtKB-KW"/>
</dbReference>
<dbReference type="GO" id="GO:0000105">
    <property type="term" value="P:L-histidine biosynthetic process"/>
    <property type="evidence" value="ECO:0007669"/>
    <property type="project" value="UniProtKB-UniRule"/>
</dbReference>
<dbReference type="CDD" id="cd04731">
    <property type="entry name" value="HisF"/>
    <property type="match status" value="1"/>
</dbReference>
<dbReference type="FunFam" id="3.20.20.70:FF:000006">
    <property type="entry name" value="Imidazole glycerol phosphate synthase subunit HisF"/>
    <property type="match status" value="1"/>
</dbReference>
<dbReference type="Gene3D" id="3.20.20.70">
    <property type="entry name" value="Aldolase class I"/>
    <property type="match status" value="1"/>
</dbReference>
<dbReference type="HAMAP" id="MF_01013">
    <property type="entry name" value="HisF"/>
    <property type="match status" value="1"/>
</dbReference>
<dbReference type="InterPro" id="IPR013785">
    <property type="entry name" value="Aldolase_TIM"/>
</dbReference>
<dbReference type="InterPro" id="IPR006062">
    <property type="entry name" value="His_biosynth"/>
</dbReference>
<dbReference type="InterPro" id="IPR004651">
    <property type="entry name" value="HisF"/>
</dbReference>
<dbReference type="InterPro" id="IPR050064">
    <property type="entry name" value="IGPS_HisA/HisF"/>
</dbReference>
<dbReference type="InterPro" id="IPR011060">
    <property type="entry name" value="RibuloseP-bd_barrel"/>
</dbReference>
<dbReference type="NCBIfam" id="TIGR00735">
    <property type="entry name" value="hisF"/>
    <property type="match status" value="1"/>
</dbReference>
<dbReference type="PANTHER" id="PTHR21235:SF2">
    <property type="entry name" value="IMIDAZOLE GLYCEROL PHOSPHATE SYNTHASE HISHF"/>
    <property type="match status" value="1"/>
</dbReference>
<dbReference type="PANTHER" id="PTHR21235">
    <property type="entry name" value="IMIDAZOLE GLYCEROL PHOSPHATE SYNTHASE SUBUNIT HISF/H IGP SYNTHASE SUBUNIT HISF/H"/>
    <property type="match status" value="1"/>
</dbReference>
<dbReference type="Pfam" id="PF00977">
    <property type="entry name" value="His_biosynth"/>
    <property type="match status" value="1"/>
</dbReference>
<dbReference type="SUPFAM" id="SSF51366">
    <property type="entry name" value="Ribulose-phoshate binding barrel"/>
    <property type="match status" value="1"/>
</dbReference>
<reference key="1">
    <citation type="journal article" date="2009" name="Appl. Environ. Microbiol.">
        <title>Rhizobium sp. strain NGR234 possesses a remarkable number of secretion systems.</title>
        <authorList>
            <person name="Schmeisser C."/>
            <person name="Liesegang H."/>
            <person name="Krysciak D."/>
            <person name="Bakkou N."/>
            <person name="Le Quere A."/>
            <person name="Wollherr A."/>
            <person name="Heinemeyer I."/>
            <person name="Morgenstern B."/>
            <person name="Pommerening-Roeser A."/>
            <person name="Flores M."/>
            <person name="Palacios R."/>
            <person name="Brenner S."/>
            <person name="Gottschalk G."/>
            <person name="Schmitz R.A."/>
            <person name="Broughton W.J."/>
            <person name="Perret X."/>
            <person name="Strittmatter A.W."/>
            <person name="Streit W.R."/>
        </authorList>
    </citation>
    <scope>NUCLEOTIDE SEQUENCE [LARGE SCALE GENOMIC DNA]</scope>
    <source>
        <strain>NBRC 101917 / NGR234</strain>
    </source>
</reference>
<accession>C3MBC1</accession>
<name>HIS6_SINFN</name>
<evidence type="ECO:0000255" key="1">
    <source>
        <dbReference type="HAMAP-Rule" id="MF_01013"/>
    </source>
</evidence>
<organism>
    <name type="scientific">Sinorhizobium fredii (strain NBRC 101917 / NGR234)</name>
    <dbReference type="NCBI Taxonomy" id="394"/>
    <lineage>
        <taxon>Bacteria</taxon>
        <taxon>Pseudomonadati</taxon>
        <taxon>Pseudomonadota</taxon>
        <taxon>Alphaproteobacteria</taxon>
        <taxon>Hyphomicrobiales</taxon>
        <taxon>Rhizobiaceae</taxon>
        <taxon>Sinorhizobium/Ensifer group</taxon>
        <taxon>Sinorhizobium</taxon>
    </lineage>
</organism>
<feature type="chain" id="PRO_1000148935" description="Imidazole glycerol phosphate synthase subunit HisF">
    <location>
        <begin position="1"/>
        <end position="258"/>
    </location>
</feature>
<feature type="active site" evidence="1">
    <location>
        <position position="12"/>
    </location>
</feature>
<feature type="active site" evidence="1">
    <location>
        <position position="131"/>
    </location>
</feature>
<comment type="function">
    <text evidence="1">IGPS catalyzes the conversion of PRFAR and glutamine to IGP, AICAR and glutamate. The HisF subunit catalyzes the cyclization activity that produces IGP and AICAR from PRFAR using the ammonia provided by the HisH subunit.</text>
</comment>
<comment type="catalytic activity">
    <reaction evidence="1">
        <text>5-[(5-phospho-1-deoxy-D-ribulos-1-ylimino)methylamino]-1-(5-phospho-beta-D-ribosyl)imidazole-4-carboxamide + L-glutamine = D-erythro-1-(imidazol-4-yl)glycerol 3-phosphate + 5-amino-1-(5-phospho-beta-D-ribosyl)imidazole-4-carboxamide + L-glutamate + H(+)</text>
        <dbReference type="Rhea" id="RHEA:24793"/>
        <dbReference type="ChEBI" id="CHEBI:15378"/>
        <dbReference type="ChEBI" id="CHEBI:29985"/>
        <dbReference type="ChEBI" id="CHEBI:58278"/>
        <dbReference type="ChEBI" id="CHEBI:58359"/>
        <dbReference type="ChEBI" id="CHEBI:58475"/>
        <dbReference type="ChEBI" id="CHEBI:58525"/>
        <dbReference type="EC" id="4.3.2.10"/>
    </reaction>
</comment>
<comment type="pathway">
    <text evidence="1">Amino-acid biosynthesis; L-histidine biosynthesis; L-histidine from 5-phospho-alpha-D-ribose 1-diphosphate: step 5/9.</text>
</comment>
<comment type="subunit">
    <text evidence="1">Heterodimer of HisH and HisF.</text>
</comment>
<comment type="subcellular location">
    <subcellularLocation>
        <location evidence="1">Cytoplasm</location>
    </subcellularLocation>
</comment>
<comment type="similarity">
    <text evidence="1">Belongs to the HisA/HisF family.</text>
</comment>
<sequence>MTLKARVIPCLDVKDGRVVKGVNFVDLIDAGDPVEAAKAYDAAGADELCFLDITASSDNRETIFDVVARTAEQCFMPLTVGGGVRQVSDIRKLLLAGADKVSINTAAVKNPEFVAEAADKFGNQCIVVAIDAKKVSAAGETDRWEIFTHGGRQPTGIDAIDFARKVVDLGAGEILLTSMDRDGTKSGYDIALTRAIADAVRAPVIASGGVGTLDHMVEGIRDGHATAVLAASIFHFGTYSIGEAKRYMAERGIAMRLD</sequence>
<keyword id="KW-0028">Amino-acid biosynthesis</keyword>
<keyword id="KW-0963">Cytoplasm</keyword>
<keyword id="KW-0368">Histidine biosynthesis</keyword>
<keyword id="KW-0456">Lyase</keyword>
<keyword id="KW-1185">Reference proteome</keyword>
<proteinExistence type="inferred from homology"/>
<gene>
    <name evidence="1" type="primary">hisF</name>
    <name type="ordered locus">NGR_c34000</name>
</gene>